<gene>
    <name evidence="1" type="primary">mraY</name>
    <name type="ordered locus">GSU3072</name>
</gene>
<evidence type="ECO:0000255" key="1">
    <source>
        <dbReference type="HAMAP-Rule" id="MF_00038"/>
    </source>
</evidence>
<dbReference type="EC" id="2.7.8.13" evidence="1"/>
<dbReference type="EMBL" id="AE017180">
    <property type="protein sequence ID" value="AAR36464.1"/>
    <property type="molecule type" value="Genomic_DNA"/>
</dbReference>
<dbReference type="RefSeq" id="NP_954114.1">
    <property type="nucleotide sequence ID" value="NC_002939.5"/>
</dbReference>
<dbReference type="RefSeq" id="WP_010943697.1">
    <property type="nucleotide sequence ID" value="NC_002939.5"/>
</dbReference>
<dbReference type="SMR" id="Q748D3"/>
<dbReference type="FunCoup" id="Q748D3">
    <property type="interactions" value="415"/>
</dbReference>
<dbReference type="STRING" id="243231.GSU3072"/>
<dbReference type="EnsemblBacteria" id="AAR36464">
    <property type="protein sequence ID" value="AAR36464"/>
    <property type="gene ID" value="GSU3072"/>
</dbReference>
<dbReference type="KEGG" id="gsu:GSU3072"/>
<dbReference type="PATRIC" id="fig|243231.5.peg.3095"/>
<dbReference type="eggNOG" id="COG0472">
    <property type="taxonomic scope" value="Bacteria"/>
</dbReference>
<dbReference type="HOGENOM" id="CLU_023982_0_0_7"/>
<dbReference type="InParanoid" id="Q748D3"/>
<dbReference type="OrthoDB" id="9805475at2"/>
<dbReference type="UniPathway" id="UPA00219"/>
<dbReference type="Proteomes" id="UP000000577">
    <property type="component" value="Chromosome"/>
</dbReference>
<dbReference type="GO" id="GO:0005886">
    <property type="term" value="C:plasma membrane"/>
    <property type="evidence" value="ECO:0000318"/>
    <property type="project" value="GO_Central"/>
</dbReference>
<dbReference type="GO" id="GO:0046872">
    <property type="term" value="F:metal ion binding"/>
    <property type="evidence" value="ECO:0007669"/>
    <property type="project" value="UniProtKB-KW"/>
</dbReference>
<dbReference type="GO" id="GO:0008963">
    <property type="term" value="F:phospho-N-acetylmuramoyl-pentapeptide-transferase activity"/>
    <property type="evidence" value="ECO:0000318"/>
    <property type="project" value="GO_Central"/>
</dbReference>
<dbReference type="GO" id="GO:0051992">
    <property type="term" value="F:UDP-N-acetylmuramoyl-L-alanyl-D-glutamyl-meso-2,6-diaminopimelyl-D-alanyl-D-alanine:undecaprenyl-phosphate transferase activity"/>
    <property type="evidence" value="ECO:0007669"/>
    <property type="project" value="RHEA"/>
</dbReference>
<dbReference type="GO" id="GO:0051301">
    <property type="term" value="P:cell division"/>
    <property type="evidence" value="ECO:0007669"/>
    <property type="project" value="UniProtKB-KW"/>
</dbReference>
<dbReference type="GO" id="GO:0044038">
    <property type="term" value="P:cell wall macromolecule biosynthetic process"/>
    <property type="evidence" value="ECO:0000318"/>
    <property type="project" value="GO_Central"/>
</dbReference>
<dbReference type="GO" id="GO:0071555">
    <property type="term" value="P:cell wall organization"/>
    <property type="evidence" value="ECO:0000318"/>
    <property type="project" value="GO_Central"/>
</dbReference>
<dbReference type="GO" id="GO:0009252">
    <property type="term" value="P:peptidoglycan biosynthetic process"/>
    <property type="evidence" value="ECO:0007669"/>
    <property type="project" value="UniProtKB-UniRule"/>
</dbReference>
<dbReference type="GO" id="GO:0008360">
    <property type="term" value="P:regulation of cell shape"/>
    <property type="evidence" value="ECO:0007669"/>
    <property type="project" value="UniProtKB-KW"/>
</dbReference>
<dbReference type="CDD" id="cd06852">
    <property type="entry name" value="GT_MraY"/>
    <property type="match status" value="1"/>
</dbReference>
<dbReference type="HAMAP" id="MF_00038">
    <property type="entry name" value="MraY"/>
    <property type="match status" value="1"/>
</dbReference>
<dbReference type="InterPro" id="IPR000715">
    <property type="entry name" value="Glycosyl_transferase_4"/>
</dbReference>
<dbReference type="InterPro" id="IPR003524">
    <property type="entry name" value="PNAcMuramoyl-5peptid_Trfase"/>
</dbReference>
<dbReference type="InterPro" id="IPR018480">
    <property type="entry name" value="PNAcMuramoyl-5peptid_Trfase_CS"/>
</dbReference>
<dbReference type="NCBIfam" id="TIGR00445">
    <property type="entry name" value="mraY"/>
    <property type="match status" value="1"/>
</dbReference>
<dbReference type="PANTHER" id="PTHR22926">
    <property type="entry name" value="PHOSPHO-N-ACETYLMURAMOYL-PENTAPEPTIDE-TRANSFERASE"/>
    <property type="match status" value="1"/>
</dbReference>
<dbReference type="PANTHER" id="PTHR22926:SF5">
    <property type="entry name" value="PHOSPHO-N-ACETYLMURAMOYL-PENTAPEPTIDE-TRANSFERASE HOMOLOG"/>
    <property type="match status" value="1"/>
</dbReference>
<dbReference type="Pfam" id="PF00953">
    <property type="entry name" value="Glycos_transf_4"/>
    <property type="match status" value="1"/>
</dbReference>
<dbReference type="Pfam" id="PF10555">
    <property type="entry name" value="MraY_sig1"/>
    <property type="match status" value="1"/>
</dbReference>
<dbReference type="PROSITE" id="PS01347">
    <property type="entry name" value="MRAY_1"/>
    <property type="match status" value="1"/>
</dbReference>
<dbReference type="PROSITE" id="PS01348">
    <property type="entry name" value="MRAY_2"/>
    <property type="match status" value="1"/>
</dbReference>
<accession>Q748D3</accession>
<organism>
    <name type="scientific">Geobacter sulfurreducens (strain ATCC 51573 / DSM 12127 / PCA)</name>
    <dbReference type="NCBI Taxonomy" id="243231"/>
    <lineage>
        <taxon>Bacteria</taxon>
        <taxon>Pseudomonadati</taxon>
        <taxon>Thermodesulfobacteriota</taxon>
        <taxon>Desulfuromonadia</taxon>
        <taxon>Geobacterales</taxon>
        <taxon>Geobacteraceae</taxon>
        <taxon>Geobacter</taxon>
    </lineage>
</organism>
<feature type="chain" id="PRO_0000108829" description="Phospho-N-acetylmuramoyl-pentapeptide-transferase">
    <location>
        <begin position="1"/>
        <end position="358"/>
    </location>
</feature>
<feature type="transmembrane region" description="Helical" evidence="1">
    <location>
        <begin position="25"/>
        <end position="45"/>
    </location>
</feature>
<feature type="transmembrane region" description="Helical" evidence="1">
    <location>
        <begin position="73"/>
        <end position="93"/>
    </location>
</feature>
<feature type="transmembrane region" description="Helical" evidence="1">
    <location>
        <begin position="97"/>
        <end position="117"/>
    </location>
</feature>
<feature type="transmembrane region" description="Helical" evidence="1">
    <location>
        <begin position="134"/>
        <end position="154"/>
    </location>
</feature>
<feature type="transmembrane region" description="Helical" evidence="1">
    <location>
        <begin position="172"/>
        <end position="192"/>
    </location>
</feature>
<feature type="transmembrane region" description="Helical" evidence="1">
    <location>
        <begin position="197"/>
        <end position="217"/>
    </location>
</feature>
<feature type="transmembrane region" description="Helical" evidence="1">
    <location>
        <begin position="233"/>
        <end position="253"/>
    </location>
</feature>
<feature type="transmembrane region" description="Helical" evidence="1">
    <location>
        <begin position="261"/>
        <end position="281"/>
    </location>
</feature>
<feature type="transmembrane region" description="Helical" evidence="1">
    <location>
        <begin position="286"/>
        <end position="306"/>
    </location>
</feature>
<feature type="transmembrane region" description="Helical" evidence="1">
    <location>
        <begin position="335"/>
        <end position="355"/>
    </location>
</feature>
<reference key="1">
    <citation type="journal article" date="2003" name="Science">
        <title>Genome of Geobacter sulfurreducens: metal reduction in subsurface environments.</title>
        <authorList>
            <person name="Methe B.A."/>
            <person name="Nelson K.E."/>
            <person name="Eisen J.A."/>
            <person name="Paulsen I.T."/>
            <person name="Nelson W.C."/>
            <person name="Heidelberg J.F."/>
            <person name="Wu D."/>
            <person name="Wu M."/>
            <person name="Ward N.L."/>
            <person name="Beanan M.J."/>
            <person name="Dodson R.J."/>
            <person name="Madupu R."/>
            <person name="Brinkac L.M."/>
            <person name="Daugherty S.C."/>
            <person name="DeBoy R.T."/>
            <person name="Durkin A.S."/>
            <person name="Gwinn M.L."/>
            <person name="Kolonay J.F."/>
            <person name="Sullivan S.A."/>
            <person name="Haft D.H."/>
            <person name="Selengut J."/>
            <person name="Davidsen T.M."/>
            <person name="Zafar N."/>
            <person name="White O."/>
            <person name="Tran B."/>
            <person name="Romero C."/>
            <person name="Forberger H.A."/>
            <person name="Weidman J.F."/>
            <person name="Khouri H.M."/>
            <person name="Feldblyum T.V."/>
            <person name="Utterback T.R."/>
            <person name="Van Aken S.E."/>
            <person name="Lovley D.R."/>
            <person name="Fraser C.M."/>
        </authorList>
    </citation>
    <scope>NUCLEOTIDE SEQUENCE [LARGE SCALE GENOMIC DNA]</scope>
    <source>
        <strain>ATCC 51573 / DSM 12127 / PCA</strain>
    </source>
</reference>
<protein>
    <recommendedName>
        <fullName evidence="1">Phospho-N-acetylmuramoyl-pentapeptide-transferase</fullName>
        <ecNumber evidence="1">2.7.8.13</ecNumber>
    </recommendedName>
    <alternativeName>
        <fullName evidence="1">UDP-MurNAc-pentapeptide phosphotransferase</fullName>
    </alternativeName>
</protein>
<sequence length="358" mass="39203">MLYHLLYPLAADFRIFNVFKYLTFRTIYAVITALVVSFILGPWVIRKLEALQARQVIRTDGPESHLKKSGTPTMGGILILASIVIPTLLWADLTNRYVWTTLFVILGYGLIGFTDDYKKVVEKDTKGLSPRQKMFWQMLIAGGAVCFLVLVAGMSTELSVPFFKRLHPDLSYLYIPFGMLVVVGASNAVNLTDGLDGLAIGPVAINAATFLLFAYIAGNAKLSSYLQTPYVPGAGELAVLCGAMVGAGIGFLWYNAYPAEVFMGDVGSLSLGGGLGILAVITKQEMLLVIVGGIFVVEALSVIFQVGSYKYRGKRIFRMAPIHHHFELKGVAEPKIIVRFWIITIILALVAISTLKLR</sequence>
<name>MRAY_GEOSL</name>
<proteinExistence type="inferred from homology"/>
<keyword id="KW-0131">Cell cycle</keyword>
<keyword id="KW-0132">Cell division</keyword>
<keyword id="KW-0997">Cell inner membrane</keyword>
<keyword id="KW-1003">Cell membrane</keyword>
<keyword id="KW-0133">Cell shape</keyword>
<keyword id="KW-0961">Cell wall biogenesis/degradation</keyword>
<keyword id="KW-0460">Magnesium</keyword>
<keyword id="KW-0472">Membrane</keyword>
<keyword id="KW-0479">Metal-binding</keyword>
<keyword id="KW-0573">Peptidoglycan synthesis</keyword>
<keyword id="KW-1185">Reference proteome</keyword>
<keyword id="KW-0808">Transferase</keyword>
<keyword id="KW-0812">Transmembrane</keyword>
<keyword id="KW-1133">Transmembrane helix</keyword>
<comment type="function">
    <text evidence="1">Catalyzes the initial step of the lipid cycle reactions in the biosynthesis of the cell wall peptidoglycan: transfers peptidoglycan precursor phospho-MurNAc-pentapeptide from UDP-MurNAc-pentapeptide onto the lipid carrier undecaprenyl phosphate, yielding undecaprenyl-pyrophosphoryl-MurNAc-pentapeptide, known as lipid I.</text>
</comment>
<comment type="catalytic activity">
    <reaction evidence="1">
        <text>UDP-N-acetyl-alpha-D-muramoyl-L-alanyl-gamma-D-glutamyl-meso-2,6-diaminopimeloyl-D-alanyl-D-alanine + di-trans,octa-cis-undecaprenyl phosphate = di-trans,octa-cis-undecaprenyl diphospho-N-acetyl-alpha-D-muramoyl-L-alanyl-D-glutamyl-meso-2,6-diaminopimeloyl-D-alanyl-D-alanine + UMP</text>
        <dbReference type="Rhea" id="RHEA:28386"/>
        <dbReference type="ChEBI" id="CHEBI:57865"/>
        <dbReference type="ChEBI" id="CHEBI:60392"/>
        <dbReference type="ChEBI" id="CHEBI:61386"/>
        <dbReference type="ChEBI" id="CHEBI:61387"/>
        <dbReference type="EC" id="2.7.8.13"/>
    </reaction>
</comment>
<comment type="cofactor">
    <cofactor evidence="1">
        <name>Mg(2+)</name>
        <dbReference type="ChEBI" id="CHEBI:18420"/>
    </cofactor>
</comment>
<comment type="pathway">
    <text evidence="1">Cell wall biogenesis; peptidoglycan biosynthesis.</text>
</comment>
<comment type="subcellular location">
    <subcellularLocation>
        <location evidence="1">Cell inner membrane</location>
        <topology evidence="1">Multi-pass membrane protein</topology>
    </subcellularLocation>
</comment>
<comment type="similarity">
    <text evidence="1">Belongs to the glycosyltransferase 4 family. MraY subfamily.</text>
</comment>